<sequence>MSLTRLLIKDFRNIENADLALSPGFNFLVGANGSGKTSVLEAIYTLGHGRAFRSLQPGRVIRHEQEAFVLHGRLQGEERETSIGLTKDKQGDSKVRIDGTDGHKIAELAHLMPMQLITPEGFTLLNGGPKYRRAFLDWGCFHNEAGFFTAWSNLKRLLKQRNAALRQVSRYEQLRPWDKELIPLAEQISTWRAEYSSAIAQDMADTCQQFLPEFSLTFSFQRGWEKETDYADVLERSFERDRMLTYTAHGPHKADFRIRADGAPVEDTLSRGQLKLLMCALRLAQGEFLTRESGRRCLYLIDDFASELDDARRGLLASRLKATQSQVFVSAISAEHVIDMSDENSKMFTVEKGKITD</sequence>
<evidence type="ECO:0000255" key="1">
    <source>
        <dbReference type="HAMAP-Rule" id="MF_00365"/>
    </source>
</evidence>
<dbReference type="EMBL" id="AM933173">
    <property type="protein sequence ID" value="CAR39383.1"/>
    <property type="molecule type" value="Genomic_DNA"/>
</dbReference>
<dbReference type="RefSeq" id="WP_000060081.1">
    <property type="nucleotide sequence ID" value="NC_011274.1"/>
</dbReference>
<dbReference type="SMR" id="B5RFY9"/>
<dbReference type="KEGG" id="seg:SG3595"/>
<dbReference type="HOGENOM" id="CLU_040267_0_0_6"/>
<dbReference type="Proteomes" id="UP000008321">
    <property type="component" value="Chromosome"/>
</dbReference>
<dbReference type="GO" id="GO:0005737">
    <property type="term" value="C:cytoplasm"/>
    <property type="evidence" value="ECO:0007669"/>
    <property type="project" value="UniProtKB-SubCell"/>
</dbReference>
<dbReference type="GO" id="GO:0005524">
    <property type="term" value="F:ATP binding"/>
    <property type="evidence" value="ECO:0007669"/>
    <property type="project" value="UniProtKB-UniRule"/>
</dbReference>
<dbReference type="GO" id="GO:0003697">
    <property type="term" value="F:single-stranded DNA binding"/>
    <property type="evidence" value="ECO:0007669"/>
    <property type="project" value="UniProtKB-UniRule"/>
</dbReference>
<dbReference type="GO" id="GO:0006260">
    <property type="term" value="P:DNA replication"/>
    <property type="evidence" value="ECO:0007669"/>
    <property type="project" value="UniProtKB-UniRule"/>
</dbReference>
<dbReference type="GO" id="GO:0000731">
    <property type="term" value="P:DNA synthesis involved in DNA repair"/>
    <property type="evidence" value="ECO:0007669"/>
    <property type="project" value="TreeGrafter"/>
</dbReference>
<dbReference type="GO" id="GO:0006302">
    <property type="term" value="P:double-strand break repair"/>
    <property type="evidence" value="ECO:0007669"/>
    <property type="project" value="TreeGrafter"/>
</dbReference>
<dbReference type="GO" id="GO:0009432">
    <property type="term" value="P:SOS response"/>
    <property type="evidence" value="ECO:0007669"/>
    <property type="project" value="UniProtKB-UniRule"/>
</dbReference>
<dbReference type="FunFam" id="1.20.1050.90:FF:000001">
    <property type="entry name" value="DNA replication and repair protein RecF"/>
    <property type="match status" value="1"/>
</dbReference>
<dbReference type="Gene3D" id="3.40.50.300">
    <property type="entry name" value="P-loop containing nucleotide triphosphate hydrolases"/>
    <property type="match status" value="1"/>
</dbReference>
<dbReference type="Gene3D" id="1.20.1050.90">
    <property type="entry name" value="RecF/RecN/SMC, N-terminal domain"/>
    <property type="match status" value="1"/>
</dbReference>
<dbReference type="HAMAP" id="MF_00365">
    <property type="entry name" value="RecF"/>
    <property type="match status" value="1"/>
</dbReference>
<dbReference type="InterPro" id="IPR001238">
    <property type="entry name" value="DNA-binding_RecF"/>
</dbReference>
<dbReference type="InterPro" id="IPR018078">
    <property type="entry name" value="DNA-binding_RecF_CS"/>
</dbReference>
<dbReference type="InterPro" id="IPR027417">
    <property type="entry name" value="P-loop_NTPase"/>
</dbReference>
<dbReference type="InterPro" id="IPR003395">
    <property type="entry name" value="RecF/RecN/SMC_N"/>
</dbReference>
<dbReference type="InterPro" id="IPR042174">
    <property type="entry name" value="RecF_2"/>
</dbReference>
<dbReference type="NCBIfam" id="TIGR00611">
    <property type="entry name" value="recf"/>
    <property type="match status" value="1"/>
</dbReference>
<dbReference type="PANTHER" id="PTHR32182">
    <property type="entry name" value="DNA REPLICATION AND REPAIR PROTEIN RECF"/>
    <property type="match status" value="1"/>
</dbReference>
<dbReference type="PANTHER" id="PTHR32182:SF0">
    <property type="entry name" value="DNA REPLICATION AND REPAIR PROTEIN RECF"/>
    <property type="match status" value="1"/>
</dbReference>
<dbReference type="Pfam" id="PF02463">
    <property type="entry name" value="SMC_N"/>
    <property type="match status" value="1"/>
</dbReference>
<dbReference type="SUPFAM" id="SSF52540">
    <property type="entry name" value="P-loop containing nucleoside triphosphate hydrolases"/>
    <property type="match status" value="1"/>
</dbReference>
<dbReference type="PROSITE" id="PS00617">
    <property type="entry name" value="RECF_1"/>
    <property type="match status" value="1"/>
</dbReference>
<dbReference type="PROSITE" id="PS00618">
    <property type="entry name" value="RECF_2"/>
    <property type="match status" value="1"/>
</dbReference>
<protein>
    <recommendedName>
        <fullName evidence="1">DNA replication and repair protein RecF</fullName>
    </recommendedName>
</protein>
<feature type="chain" id="PRO_1000121149" description="DNA replication and repair protein RecF">
    <location>
        <begin position="1"/>
        <end position="357"/>
    </location>
</feature>
<feature type="binding site" evidence="1">
    <location>
        <begin position="30"/>
        <end position="37"/>
    </location>
    <ligand>
        <name>ATP</name>
        <dbReference type="ChEBI" id="CHEBI:30616"/>
    </ligand>
</feature>
<keyword id="KW-0067">ATP-binding</keyword>
<keyword id="KW-0963">Cytoplasm</keyword>
<keyword id="KW-0227">DNA damage</keyword>
<keyword id="KW-0234">DNA repair</keyword>
<keyword id="KW-0235">DNA replication</keyword>
<keyword id="KW-0238">DNA-binding</keyword>
<keyword id="KW-0547">Nucleotide-binding</keyword>
<keyword id="KW-0742">SOS response</keyword>
<accession>B5RFY9</accession>
<reference key="1">
    <citation type="journal article" date="2008" name="Genome Res.">
        <title>Comparative genome analysis of Salmonella enteritidis PT4 and Salmonella gallinarum 287/91 provides insights into evolutionary and host adaptation pathways.</title>
        <authorList>
            <person name="Thomson N.R."/>
            <person name="Clayton D.J."/>
            <person name="Windhorst D."/>
            <person name="Vernikos G."/>
            <person name="Davidson S."/>
            <person name="Churcher C."/>
            <person name="Quail M.A."/>
            <person name="Stevens M."/>
            <person name="Jones M.A."/>
            <person name="Watson M."/>
            <person name="Barron A."/>
            <person name="Layton A."/>
            <person name="Pickard D."/>
            <person name="Kingsley R.A."/>
            <person name="Bignell A."/>
            <person name="Clark L."/>
            <person name="Harris B."/>
            <person name="Ormond D."/>
            <person name="Abdellah Z."/>
            <person name="Brooks K."/>
            <person name="Cherevach I."/>
            <person name="Chillingworth T."/>
            <person name="Woodward J."/>
            <person name="Norberczak H."/>
            <person name="Lord A."/>
            <person name="Arrowsmith C."/>
            <person name="Jagels K."/>
            <person name="Moule S."/>
            <person name="Mungall K."/>
            <person name="Saunders M."/>
            <person name="Whitehead S."/>
            <person name="Chabalgoity J.A."/>
            <person name="Maskell D."/>
            <person name="Humphreys T."/>
            <person name="Roberts M."/>
            <person name="Barrow P.A."/>
            <person name="Dougan G."/>
            <person name="Parkhill J."/>
        </authorList>
    </citation>
    <scope>NUCLEOTIDE SEQUENCE [LARGE SCALE GENOMIC DNA]</scope>
    <source>
        <strain>287/91 / NCTC 13346</strain>
    </source>
</reference>
<proteinExistence type="inferred from homology"/>
<name>RECF_SALG2</name>
<gene>
    <name evidence="1" type="primary">recF</name>
    <name type="ordered locus">SG3595</name>
</gene>
<organism>
    <name type="scientific">Salmonella gallinarum (strain 287/91 / NCTC 13346)</name>
    <dbReference type="NCBI Taxonomy" id="550538"/>
    <lineage>
        <taxon>Bacteria</taxon>
        <taxon>Pseudomonadati</taxon>
        <taxon>Pseudomonadota</taxon>
        <taxon>Gammaproteobacteria</taxon>
        <taxon>Enterobacterales</taxon>
        <taxon>Enterobacteriaceae</taxon>
        <taxon>Salmonella</taxon>
    </lineage>
</organism>
<comment type="function">
    <text evidence="1">The RecF protein is involved in DNA metabolism; it is required for DNA replication and normal SOS inducibility. RecF binds preferentially to single-stranded, linear DNA. It also seems to bind ATP.</text>
</comment>
<comment type="subcellular location">
    <subcellularLocation>
        <location evidence="1">Cytoplasm</location>
    </subcellularLocation>
</comment>
<comment type="similarity">
    <text evidence="1">Belongs to the RecF family.</text>
</comment>